<evidence type="ECO:0000255" key="1">
    <source>
        <dbReference type="HAMAP-Rule" id="MF_03017"/>
    </source>
</evidence>
<protein>
    <recommendedName>
        <fullName evidence="1">Kynureninase 1</fullName>
        <ecNumber evidence="1">3.7.1.3</ecNumber>
    </recommendedName>
    <alternativeName>
        <fullName evidence="1">Biosynthesis of nicotinic acid protein 5-1</fullName>
    </alternativeName>
    <alternativeName>
        <fullName evidence="1">L-kynurenine hydrolase 1</fullName>
    </alternativeName>
</protein>
<sequence>MGSRLHVQEIKKGPPLPFKDDIRAFTREYAESLDAQDPLRHFRDEFIIPSKKDLKRKTLNANENIEDSSDPRSIYLCGNSLGLQPRNTRKYLEHYLRTWAIKGVTGHFTPHDDQLLPPFVDVDDAGAKLMAPIVGALESEVAVMGTLTANLHFLMASFYQPTKEKYKIILEGKAFPSDHYAVESQIQHHNLDPKDAMVLIELENLDRPILDTEKILRVIDEHASSTALILLSGIQFYTGQYFDIEKITAYAHSKGIIIGWDCAHAAGNVELKLHDWNVDFAAWCNYKYLNSGPGGMAGLFVHENHGRVDMTKVGSKDEPFRPRLSGWWGDDKKTRFRMENRFVPQPGAAGFQLSNPSVLDMNAVAASLEIFNRTSMAEIRKKSLDLTGYLEHLLLKYPLDAAPEDKPFSIITPSNPAERGAQLSLRLGPGLLDNVLEVLEENGVVIDERKPDVIRVAPAPLYNTYADVWQFCQIFFDACQKAVRARK</sequence>
<gene>
    <name type="primary">bna5-1</name>
    <name type="ORF">AO090011000602</name>
</gene>
<reference key="1">
    <citation type="journal article" date="2005" name="Nature">
        <title>Genome sequencing and analysis of Aspergillus oryzae.</title>
        <authorList>
            <person name="Machida M."/>
            <person name="Asai K."/>
            <person name="Sano M."/>
            <person name="Tanaka T."/>
            <person name="Kumagai T."/>
            <person name="Terai G."/>
            <person name="Kusumoto K."/>
            <person name="Arima T."/>
            <person name="Akita O."/>
            <person name="Kashiwagi Y."/>
            <person name="Abe K."/>
            <person name="Gomi K."/>
            <person name="Horiuchi H."/>
            <person name="Kitamoto K."/>
            <person name="Kobayashi T."/>
            <person name="Takeuchi M."/>
            <person name="Denning D.W."/>
            <person name="Galagan J.E."/>
            <person name="Nierman W.C."/>
            <person name="Yu J."/>
            <person name="Archer D.B."/>
            <person name="Bennett J.W."/>
            <person name="Bhatnagar D."/>
            <person name="Cleveland T.E."/>
            <person name="Fedorova N.D."/>
            <person name="Gotoh O."/>
            <person name="Horikawa H."/>
            <person name="Hosoyama A."/>
            <person name="Ichinomiya M."/>
            <person name="Igarashi R."/>
            <person name="Iwashita K."/>
            <person name="Juvvadi P.R."/>
            <person name="Kato M."/>
            <person name="Kato Y."/>
            <person name="Kin T."/>
            <person name="Kokubun A."/>
            <person name="Maeda H."/>
            <person name="Maeyama N."/>
            <person name="Maruyama J."/>
            <person name="Nagasaki H."/>
            <person name="Nakajima T."/>
            <person name="Oda K."/>
            <person name="Okada K."/>
            <person name="Paulsen I."/>
            <person name="Sakamoto K."/>
            <person name="Sawano T."/>
            <person name="Takahashi M."/>
            <person name="Takase K."/>
            <person name="Terabayashi Y."/>
            <person name="Wortman J.R."/>
            <person name="Yamada O."/>
            <person name="Yamagata Y."/>
            <person name="Anazawa H."/>
            <person name="Hata Y."/>
            <person name="Koide Y."/>
            <person name="Komori T."/>
            <person name="Koyama Y."/>
            <person name="Minetoki T."/>
            <person name="Suharnan S."/>
            <person name="Tanaka A."/>
            <person name="Isono K."/>
            <person name="Kuhara S."/>
            <person name="Ogasawara N."/>
            <person name="Kikuchi H."/>
        </authorList>
    </citation>
    <scope>NUCLEOTIDE SEQUENCE [LARGE SCALE GENOMIC DNA]</scope>
    <source>
        <strain>ATCC 42149 / RIB 40</strain>
    </source>
</reference>
<dbReference type="EC" id="3.7.1.3" evidence="1"/>
<dbReference type="EMBL" id="BA000055">
    <property type="protein sequence ID" value="BAE65077.1"/>
    <property type="molecule type" value="Genomic_DNA"/>
</dbReference>
<dbReference type="RefSeq" id="XP_001826210.1">
    <property type="nucleotide sequence ID" value="XM_001826158.2"/>
</dbReference>
<dbReference type="SMR" id="Q2U038"/>
<dbReference type="STRING" id="510516.Q2U038"/>
<dbReference type="EnsemblFungi" id="BAE65077">
    <property type="protein sequence ID" value="BAE65077"/>
    <property type="gene ID" value="AO090011000602"/>
</dbReference>
<dbReference type="GeneID" id="5998313"/>
<dbReference type="KEGG" id="aor:AO090011000602"/>
<dbReference type="VEuPathDB" id="FungiDB:AO090011000602"/>
<dbReference type="HOGENOM" id="CLU_003433_4_0_1"/>
<dbReference type="OMA" id="LPGWNSH"/>
<dbReference type="OrthoDB" id="27976at5052"/>
<dbReference type="UniPathway" id="UPA00253">
    <property type="reaction ID" value="UER00329"/>
</dbReference>
<dbReference type="UniPathway" id="UPA00334">
    <property type="reaction ID" value="UER00455"/>
</dbReference>
<dbReference type="Proteomes" id="UP000006564">
    <property type="component" value="Chromosome 7"/>
</dbReference>
<dbReference type="GO" id="GO:0005737">
    <property type="term" value="C:cytoplasm"/>
    <property type="evidence" value="ECO:0007669"/>
    <property type="project" value="UniProtKB-SubCell"/>
</dbReference>
<dbReference type="GO" id="GO:0030429">
    <property type="term" value="F:kynureninase activity"/>
    <property type="evidence" value="ECO:0007669"/>
    <property type="project" value="UniProtKB-UniRule"/>
</dbReference>
<dbReference type="GO" id="GO:0030170">
    <property type="term" value="F:pyridoxal phosphate binding"/>
    <property type="evidence" value="ECO:0007669"/>
    <property type="project" value="UniProtKB-UniRule"/>
</dbReference>
<dbReference type="GO" id="GO:0034354">
    <property type="term" value="P:'de novo' NAD biosynthetic process from L-tryptophan"/>
    <property type="evidence" value="ECO:0007669"/>
    <property type="project" value="UniProtKB-UniRule"/>
</dbReference>
<dbReference type="GO" id="GO:0043420">
    <property type="term" value="P:anthranilate metabolic process"/>
    <property type="evidence" value="ECO:0007669"/>
    <property type="project" value="UniProtKB-UniRule"/>
</dbReference>
<dbReference type="GO" id="GO:0097053">
    <property type="term" value="P:L-kynurenine catabolic process"/>
    <property type="evidence" value="ECO:0007669"/>
    <property type="project" value="UniProtKB-UniRule"/>
</dbReference>
<dbReference type="GO" id="GO:0019441">
    <property type="term" value="P:L-tryptophan catabolic process to kynurenine"/>
    <property type="evidence" value="ECO:0007669"/>
    <property type="project" value="TreeGrafter"/>
</dbReference>
<dbReference type="GO" id="GO:0019805">
    <property type="term" value="P:quinolinate biosynthetic process"/>
    <property type="evidence" value="ECO:0007669"/>
    <property type="project" value="UniProtKB-UniRule"/>
</dbReference>
<dbReference type="FunFam" id="3.40.640.10:FF:000031">
    <property type="entry name" value="Kynureninase"/>
    <property type="match status" value="1"/>
</dbReference>
<dbReference type="Gene3D" id="3.90.1150.10">
    <property type="entry name" value="Aspartate Aminotransferase, domain 1"/>
    <property type="match status" value="1"/>
</dbReference>
<dbReference type="Gene3D" id="3.40.640.10">
    <property type="entry name" value="Type I PLP-dependent aspartate aminotransferase-like (Major domain)"/>
    <property type="match status" value="1"/>
</dbReference>
<dbReference type="HAMAP" id="MF_01970">
    <property type="entry name" value="Kynureninase"/>
    <property type="match status" value="1"/>
</dbReference>
<dbReference type="InterPro" id="IPR010111">
    <property type="entry name" value="Kynureninase"/>
</dbReference>
<dbReference type="InterPro" id="IPR015424">
    <property type="entry name" value="PyrdxlP-dep_Trfase"/>
</dbReference>
<dbReference type="InterPro" id="IPR015421">
    <property type="entry name" value="PyrdxlP-dep_Trfase_major"/>
</dbReference>
<dbReference type="InterPro" id="IPR015422">
    <property type="entry name" value="PyrdxlP-dep_Trfase_small"/>
</dbReference>
<dbReference type="NCBIfam" id="TIGR01814">
    <property type="entry name" value="kynureninase"/>
    <property type="match status" value="1"/>
</dbReference>
<dbReference type="PANTHER" id="PTHR14084">
    <property type="entry name" value="KYNURENINASE"/>
    <property type="match status" value="1"/>
</dbReference>
<dbReference type="PANTHER" id="PTHR14084:SF0">
    <property type="entry name" value="KYNURENINASE"/>
    <property type="match status" value="1"/>
</dbReference>
<dbReference type="Pfam" id="PF22580">
    <property type="entry name" value="KYNU_C"/>
    <property type="match status" value="1"/>
</dbReference>
<dbReference type="PIRSF" id="PIRSF038800">
    <property type="entry name" value="KYNU"/>
    <property type="match status" value="1"/>
</dbReference>
<dbReference type="SUPFAM" id="SSF53383">
    <property type="entry name" value="PLP-dependent transferases"/>
    <property type="match status" value="1"/>
</dbReference>
<feature type="chain" id="PRO_0000356969" description="Kynureninase 1">
    <location>
        <begin position="1"/>
        <end position="487"/>
    </location>
</feature>
<feature type="binding site" evidence="1">
    <location>
        <position position="147"/>
    </location>
    <ligand>
        <name>pyridoxal 5'-phosphate</name>
        <dbReference type="ChEBI" id="CHEBI:597326"/>
    </ligand>
</feature>
<feature type="binding site" evidence="1">
    <location>
        <position position="148"/>
    </location>
    <ligand>
        <name>pyridoxal 5'-phosphate</name>
        <dbReference type="ChEBI" id="CHEBI:597326"/>
    </ligand>
</feature>
<feature type="binding site" evidence="1">
    <location>
        <begin position="175"/>
        <end position="178"/>
    </location>
    <ligand>
        <name>pyridoxal 5'-phosphate</name>
        <dbReference type="ChEBI" id="CHEBI:597326"/>
    </ligand>
</feature>
<feature type="binding site" evidence="1">
    <location>
        <position position="232"/>
    </location>
    <ligand>
        <name>pyridoxal 5'-phosphate</name>
        <dbReference type="ChEBI" id="CHEBI:597326"/>
    </ligand>
</feature>
<feature type="binding site" evidence="1">
    <location>
        <position position="261"/>
    </location>
    <ligand>
        <name>pyridoxal 5'-phosphate</name>
        <dbReference type="ChEBI" id="CHEBI:597326"/>
    </ligand>
</feature>
<feature type="binding site" evidence="1">
    <location>
        <position position="264"/>
    </location>
    <ligand>
        <name>pyridoxal 5'-phosphate</name>
        <dbReference type="ChEBI" id="CHEBI:597326"/>
    </ligand>
</feature>
<feature type="binding site" evidence="1">
    <location>
        <position position="286"/>
    </location>
    <ligand>
        <name>pyridoxal 5'-phosphate</name>
        <dbReference type="ChEBI" id="CHEBI:597326"/>
    </ligand>
</feature>
<feature type="binding site" evidence="1">
    <location>
        <position position="327"/>
    </location>
    <ligand>
        <name>pyridoxal 5'-phosphate</name>
        <dbReference type="ChEBI" id="CHEBI:597326"/>
    </ligand>
</feature>
<feature type="binding site" evidence="1">
    <location>
        <position position="355"/>
    </location>
    <ligand>
        <name>pyridoxal 5'-phosphate</name>
        <dbReference type="ChEBI" id="CHEBI:597326"/>
    </ligand>
</feature>
<feature type="modified residue" description="N6-(pyridoxal phosphate)lysine" evidence="1">
    <location>
        <position position="287"/>
    </location>
</feature>
<accession>Q2U038</accession>
<comment type="function">
    <text evidence="1">Catalyzes the cleavage of L-kynurenine (L-Kyn) and L-3-hydroxykynurenine (L-3OHKyn) into anthranilic acid (AA) and 3-hydroxyanthranilic acid (3-OHAA), respectively.</text>
</comment>
<comment type="catalytic activity">
    <reaction evidence="1">
        <text>L-kynurenine + H2O = anthranilate + L-alanine + H(+)</text>
        <dbReference type="Rhea" id="RHEA:16813"/>
        <dbReference type="ChEBI" id="CHEBI:15377"/>
        <dbReference type="ChEBI" id="CHEBI:15378"/>
        <dbReference type="ChEBI" id="CHEBI:16567"/>
        <dbReference type="ChEBI" id="CHEBI:57959"/>
        <dbReference type="ChEBI" id="CHEBI:57972"/>
        <dbReference type="EC" id="3.7.1.3"/>
    </reaction>
</comment>
<comment type="catalytic activity">
    <reaction evidence="1">
        <text>3-hydroxy-L-kynurenine + H2O = 3-hydroxyanthranilate + L-alanine + H(+)</text>
        <dbReference type="Rhea" id="RHEA:25143"/>
        <dbReference type="ChEBI" id="CHEBI:15377"/>
        <dbReference type="ChEBI" id="CHEBI:15378"/>
        <dbReference type="ChEBI" id="CHEBI:36559"/>
        <dbReference type="ChEBI" id="CHEBI:57972"/>
        <dbReference type="ChEBI" id="CHEBI:58125"/>
        <dbReference type="EC" id="3.7.1.3"/>
    </reaction>
</comment>
<comment type="cofactor">
    <cofactor evidence="1">
        <name>pyridoxal 5'-phosphate</name>
        <dbReference type="ChEBI" id="CHEBI:597326"/>
    </cofactor>
</comment>
<comment type="pathway">
    <text evidence="1">Amino-acid degradation; L-kynurenine degradation; L-alanine and anthranilate from L-kynurenine: step 1/1.</text>
</comment>
<comment type="pathway">
    <text evidence="1">Cofactor biosynthesis; NAD(+) biosynthesis; quinolinate from L-kynurenine: step 2/3.</text>
</comment>
<comment type="subunit">
    <text evidence="1">Homodimer.</text>
</comment>
<comment type="subcellular location">
    <subcellularLocation>
        <location evidence="1">Cytoplasm</location>
    </subcellularLocation>
</comment>
<comment type="similarity">
    <text evidence="1">Belongs to the kynureninase family.</text>
</comment>
<organism>
    <name type="scientific">Aspergillus oryzae (strain ATCC 42149 / RIB 40)</name>
    <name type="common">Yellow koji mold</name>
    <dbReference type="NCBI Taxonomy" id="510516"/>
    <lineage>
        <taxon>Eukaryota</taxon>
        <taxon>Fungi</taxon>
        <taxon>Dikarya</taxon>
        <taxon>Ascomycota</taxon>
        <taxon>Pezizomycotina</taxon>
        <taxon>Eurotiomycetes</taxon>
        <taxon>Eurotiomycetidae</taxon>
        <taxon>Eurotiales</taxon>
        <taxon>Aspergillaceae</taxon>
        <taxon>Aspergillus</taxon>
        <taxon>Aspergillus subgen. Circumdati</taxon>
    </lineage>
</organism>
<proteinExistence type="inferred from homology"/>
<name>KYNU1_ASPOR</name>
<keyword id="KW-0963">Cytoplasm</keyword>
<keyword id="KW-0378">Hydrolase</keyword>
<keyword id="KW-0662">Pyridine nucleotide biosynthesis</keyword>
<keyword id="KW-0663">Pyridoxal phosphate</keyword>
<keyword id="KW-1185">Reference proteome</keyword>